<keyword id="KW-0966">Cell projection</keyword>
<keyword id="KW-0968">Cytoplasmic vesicle</keyword>
<keyword id="KW-0256">Endoplasmic reticulum</keyword>
<keyword id="KW-0325">Glycoprotein</keyword>
<keyword id="KW-0378">Hydrolase</keyword>
<keyword id="KW-0472">Membrane</keyword>
<keyword id="KW-0539">Nucleus</keyword>
<keyword id="KW-1185">Reference proteome</keyword>
<keyword id="KW-0732">Signal</keyword>
<keyword id="KW-0770">Synapse</keyword>
<comment type="function">
    <text evidence="2">Protein with chaperone functions important for the control of protein folding, processing, stability and localization as well as for the reduction of misfolded protein aggregates. Involved in the regulation of synaptic vesicle recycling, controls STON2 protein stability in collaboration with the COP9 signalosome complex (CSN). In the nucleus, may link the cytoskeleton with the nuclear envelope, this mechanism seems to be crucial for the control of nuclear polarity, cell movement and, specifically in neurons, nuclear envelope integrity. Participates in the cellular trafficking and may regulate the subcellular location of multipass membrane proteins such as the dopamine transporter SLC6A3, leading to the modulation of dopamine neurotransmission. In the endoplasmic reticulum, plays a role in the quality control of protein folding by increasing clearance of misfolded proteins such as SGCE variants or holding them in an intermediate state for proper refolding. May have a redundant function with TOR1B in non-neural tissues (By similarity).</text>
</comment>
<comment type="catalytic activity">
    <reaction>
        <text>ATP + H2O = ADP + phosphate + H(+)</text>
        <dbReference type="Rhea" id="RHEA:13065"/>
        <dbReference type="ChEBI" id="CHEBI:15377"/>
        <dbReference type="ChEBI" id="CHEBI:15378"/>
        <dbReference type="ChEBI" id="CHEBI:30616"/>
        <dbReference type="ChEBI" id="CHEBI:43474"/>
        <dbReference type="ChEBI" id="CHEBI:456216"/>
    </reaction>
</comment>
<comment type="subunit">
    <text evidence="4 5">Homohexamer. Interacts with TOR1B; the interaction may be specific of neural tissues. Interacts (ATP-bound) with TOR1AIP1 and TOR1AIP2; the interactions induce ATPase activity. Interacts with KLHL14; preferentially when ATP-free. Interacts with KLC1 (via TPR repeats); the interaction associates TOR1A with the kinesin oligomeric complex. Interacts with COPS4; the interaction associates TOR1A with the CSN complex. Interacts with SNAPIN; the interaction is direct and associates SNAPIN with the CSN complex. Interacts with STON2. Interacts (ATP-bound) with SYNE3 (via KASH domain); the interaction is required for SYNE3 nuclear envelope localization. Interacts with VIM; the interaction associates TOR1A with the cytoskeleton. Interacts with PLEC. Interacts (ATP-bound) with SLC6A3; regulates SLC6A3 transport to the plasma membrane.</text>
</comment>
<comment type="subcellular location">
    <subcellularLocation>
        <location evidence="2">Endoplasmic reticulum lumen</location>
    </subcellularLocation>
    <subcellularLocation>
        <location evidence="1">Nucleus inner membrane</location>
        <topology evidence="1">Peripheral membrane protein</topology>
    </subcellularLocation>
    <subcellularLocation>
        <location>Cell projection</location>
        <location>Growth cone</location>
    </subcellularLocation>
    <subcellularLocation>
        <location>Cytoplasmic vesicle membrane</location>
    </subcellularLocation>
    <subcellularLocation>
        <location>Cytoplasmic vesicle</location>
        <location>Secretory vesicle</location>
    </subcellularLocation>
    <subcellularLocation>
        <location>Cytoplasmic vesicle</location>
        <location>Secretory vesicle</location>
        <location>Synaptic vesicle</location>
    </subcellularLocation>
    <text>Peripherally associated with the inner face of the ER membrane, probably mediated by the interaction with TOR1AIP1. The association with nucleus envelope is mediated by the interaction with TOR1AIP2. Upon oxidative stress, redistributes to protusions from the cell surface.</text>
</comment>
<comment type="tissue specificity">
    <text evidence="4">Expressed in brain (at protein level).</text>
</comment>
<comment type="PTM">
    <text evidence="3 4">N-glycosylated.</text>
</comment>
<comment type="similarity">
    <text evidence="6">Belongs to the ClpA/ClpB family. Torsin subfamily.</text>
</comment>
<protein>
    <recommendedName>
        <fullName>Torsin-1A</fullName>
    </recommendedName>
    <alternativeName>
        <fullName>Dystonia 1 protein</fullName>
    </alternativeName>
    <alternativeName>
        <fullName>Torsin ATPase 1</fullName>
        <ecNumber>3.6.4.-</ecNumber>
    </alternativeName>
</protein>
<evidence type="ECO:0000250" key="1"/>
<evidence type="ECO:0000250" key="2">
    <source>
        <dbReference type="UniProtKB" id="O14656"/>
    </source>
</evidence>
<evidence type="ECO:0000269" key="3">
    <source>
    </source>
</evidence>
<evidence type="ECO:0000269" key="4">
    <source>
    </source>
</evidence>
<evidence type="ECO:0000269" key="5">
    <source>
    </source>
</evidence>
<evidence type="ECO:0000305" key="6"/>
<gene>
    <name type="primary">Tor1a</name>
    <name type="synonym">Dyt1</name>
</gene>
<accession>Q68G38</accession>
<accession>Q8K3L8</accession>
<reference key="1">
    <citation type="journal article" date="2002" name="Brain Res. Mol. Brain Res.">
        <title>Molecular cloning and expression of rat torsinA in the normal and genetically dystonic (dt) rat.</title>
        <authorList>
            <person name="Ziefer P."/>
            <person name="Leung J."/>
            <person name="Razzano T."/>
            <person name="Shalish C."/>
            <person name="LeDoux M.S."/>
            <person name="Lorden J.F."/>
            <person name="Ozelius L."/>
            <person name="Breakefield X.O."/>
            <person name="Standaert D.G."/>
            <person name="Augood S.J."/>
        </authorList>
    </citation>
    <scope>NUCLEOTIDE SEQUENCE [MRNA]</scope>
</reference>
<reference key="2">
    <citation type="journal article" date="2004" name="Nature">
        <title>Genome sequence of the Brown Norway rat yields insights into mammalian evolution.</title>
        <authorList>
            <person name="Gibbs R.A."/>
            <person name="Weinstock G.M."/>
            <person name="Metzker M.L."/>
            <person name="Muzny D.M."/>
            <person name="Sodergren E.J."/>
            <person name="Scherer S."/>
            <person name="Scott G."/>
            <person name="Steffen D."/>
            <person name="Worley K.C."/>
            <person name="Burch P.E."/>
            <person name="Okwuonu G."/>
            <person name="Hines S."/>
            <person name="Lewis L."/>
            <person name="Deramo C."/>
            <person name="Delgado O."/>
            <person name="Dugan-Rocha S."/>
            <person name="Miner G."/>
            <person name="Morgan M."/>
            <person name="Hawes A."/>
            <person name="Gill R."/>
            <person name="Holt R.A."/>
            <person name="Adams M.D."/>
            <person name="Amanatides P.G."/>
            <person name="Baden-Tillson H."/>
            <person name="Barnstead M."/>
            <person name="Chin S."/>
            <person name="Evans C.A."/>
            <person name="Ferriera S."/>
            <person name="Fosler C."/>
            <person name="Glodek A."/>
            <person name="Gu Z."/>
            <person name="Jennings D."/>
            <person name="Kraft C.L."/>
            <person name="Nguyen T."/>
            <person name="Pfannkoch C.M."/>
            <person name="Sitter C."/>
            <person name="Sutton G.G."/>
            <person name="Venter J.C."/>
            <person name="Woodage T."/>
            <person name="Smith D."/>
            <person name="Lee H.-M."/>
            <person name="Gustafson E."/>
            <person name="Cahill P."/>
            <person name="Kana A."/>
            <person name="Doucette-Stamm L."/>
            <person name="Weinstock K."/>
            <person name="Fechtel K."/>
            <person name="Weiss R.B."/>
            <person name="Dunn D.M."/>
            <person name="Green E.D."/>
            <person name="Blakesley R.W."/>
            <person name="Bouffard G.G."/>
            <person name="De Jong P.J."/>
            <person name="Osoegawa K."/>
            <person name="Zhu B."/>
            <person name="Marra M."/>
            <person name="Schein J."/>
            <person name="Bosdet I."/>
            <person name="Fjell C."/>
            <person name="Jones S."/>
            <person name="Krzywinski M."/>
            <person name="Mathewson C."/>
            <person name="Siddiqui A."/>
            <person name="Wye N."/>
            <person name="McPherson J."/>
            <person name="Zhao S."/>
            <person name="Fraser C.M."/>
            <person name="Shetty J."/>
            <person name="Shatsman S."/>
            <person name="Geer K."/>
            <person name="Chen Y."/>
            <person name="Abramzon S."/>
            <person name="Nierman W.C."/>
            <person name="Havlak P.H."/>
            <person name="Chen R."/>
            <person name="Durbin K.J."/>
            <person name="Egan A."/>
            <person name="Ren Y."/>
            <person name="Song X.-Z."/>
            <person name="Li B."/>
            <person name="Liu Y."/>
            <person name="Qin X."/>
            <person name="Cawley S."/>
            <person name="Cooney A.J."/>
            <person name="D'Souza L.M."/>
            <person name="Martin K."/>
            <person name="Wu J.Q."/>
            <person name="Gonzalez-Garay M.L."/>
            <person name="Jackson A.R."/>
            <person name="Kalafus K.J."/>
            <person name="McLeod M.P."/>
            <person name="Milosavljevic A."/>
            <person name="Virk D."/>
            <person name="Volkov A."/>
            <person name="Wheeler D.A."/>
            <person name="Zhang Z."/>
            <person name="Bailey J.A."/>
            <person name="Eichler E.E."/>
            <person name="Tuzun E."/>
            <person name="Birney E."/>
            <person name="Mongin E."/>
            <person name="Ureta-Vidal A."/>
            <person name="Woodwark C."/>
            <person name="Zdobnov E."/>
            <person name="Bork P."/>
            <person name="Suyama M."/>
            <person name="Torrents D."/>
            <person name="Alexandersson M."/>
            <person name="Trask B.J."/>
            <person name="Young J.M."/>
            <person name="Huang H."/>
            <person name="Wang H."/>
            <person name="Xing H."/>
            <person name="Daniels S."/>
            <person name="Gietzen D."/>
            <person name="Schmidt J."/>
            <person name="Stevens K."/>
            <person name="Vitt U."/>
            <person name="Wingrove J."/>
            <person name="Camara F."/>
            <person name="Mar Alba M."/>
            <person name="Abril J.F."/>
            <person name="Guigo R."/>
            <person name="Smit A."/>
            <person name="Dubchak I."/>
            <person name="Rubin E.M."/>
            <person name="Couronne O."/>
            <person name="Poliakov A."/>
            <person name="Huebner N."/>
            <person name="Ganten D."/>
            <person name="Goesele C."/>
            <person name="Hummel O."/>
            <person name="Kreitler T."/>
            <person name="Lee Y.-A."/>
            <person name="Monti J."/>
            <person name="Schulz H."/>
            <person name="Zimdahl H."/>
            <person name="Himmelbauer H."/>
            <person name="Lehrach H."/>
            <person name="Jacob H.J."/>
            <person name="Bromberg S."/>
            <person name="Gullings-Handley J."/>
            <person name="Jensen-Seaman M.I."/>
            <person name="Kwitek A.E."/>
            <person name="Lazar J."/>
            <person name="Pasko D."/>
            <person name="Tonellato P.J."/>
            <person name="Twigger S."/>
            <person name="Ponting C.P."/>
            <person name="Duarte J.M."/>
            <person name="Rice S."/>
            <person name="Goodstadt L."/>
            <person name="Beatson S.A."/>
            <person name="Emes R.D."/>
            <person name="Winter E.E."/>
            <person name="Webber C."/>
            <person name="Brandt P."/>
            <person name="Nyakatura G."/>
            <person name="Adetobi M."/>
            <person name="Chiaromonte F."/>
            <person name="Elnitski L."/>
            <person name="Eswara P."/>
            <person name="Hardison R.C."/>
            <person name="Hou M."/>
            <person name="Kolbe D."/>
            <person name="Makova K."/>
            <person name="Miller W."/>
            <person name="Nekrutenko A."/>
            <person name="Riemer C."/>
            <person name="Schwartz S."/>
            <person name="Taylor J."/>
            <person name="Yang S."/>
            <person name="Zhang Y."/>
            <person name="Lindpaintner K."/>
            <person name="Andrews T.D."/>
            <person name="Caccamo M."/>
            <person name="Clamp M."/>
            <person name="Clarke L."/>
            <person name="Curwen V."/>
            <person name="Durbin R.M."/>
            <person name="Eyras E."/>
            <person name="Searle S.M."/>
            <person name="Cooper G.M."/>
            <person name="Batzoglou S."/>
            <person name="Brudno M."/>
            <person name="Sidow A."/>
            <person name="Stone E.A."/>
            <person name="Payseur B.A."/>
            <person name="Bourque G."/>
            <person name="Lopez-Otin C."/>
            <person name="Puente X.S."/>
            <person name="Chakrabarti K."/>
            <person name="Chatterji S."/>
            <person name="Dewey C."/>
            <person name="Pachter L."/>
            <person name="Bray N."/>
            <person name="Yap V.B."/>
            <person name="Caspi A."/>
            <person name="Tesler G."/>
            <person name="Pevzner P.A."/>
            <person name="Haussler D."/>
            <person name="Roskin K.M."/>
            <person name="Baertsch R."/>
            <person name="Clawson H."/>
            <person name="Furey T.S."/>
            <person name="Hinrichs A.S."/>
            <person name="Karolchik D."/>
            <person name="Kent W.J."/>
            <person name="Rosenbloom K.R."/>
            <person name="Trumbower H."/>
            <person name="Weirauch M."/>
            <person name="Cooper D.N."/>
            <person name="Stenson P.D."/>
            <person name="Ma B."/>
            <person name="Brent M."/>
            <person name="Arumugam M."/>
            <person name="Shteynberg D."/>
            <person name="Copley R.R."/>
            <person name="Taylor M.S."/>
            <person name="Riethman H."/>
            <person name="Mudunuri U."/>
            <person name="Peterson J."/>
            <person name="Guyer M."/>
            <person name="Felsenfeld A."/>
            <person name="Old S."/>
            <person name="Mockrin S."/>
            <person name="Collins F.S."/>
        </authorList>
    </citation>
    <scope>NUCLEOTIDE SEQUENCE [LARGE SCALE GENOMIC DNA]</scope>
    <source>
        <strain>Brown Norway</strain>
    </source>
</reference>
<reference key="3">
    <citation type="submission" date="2005-09" db="EMBL/GenBank/DDBJ databases">
        <authorList>
            <person name="Mural R.J."/>
            <person name="Adams M.D."/>
            <person name="Myers E.W."/>
            <person name="Smith H.O."/>
            <person name="Venter J.C."/>
        </authorList>
    </citation>
    <scope>NUCLEOTIDE SEQUENCE [LARGE SCALE GENOMIC DNA]</scope>
</reference>
<reference key="4">
    <citation type="journal article" date="2004" name="Genome Res.">
        <title>The status, quality, and expansion of the NIH full-length cDNA project: the Mammalian Gene Collection (MGC).</title>
        <authorList>
            <consortium name="The MGC Project Team"/>
        </authorList>
    </citation>
    <scope>NUCLEOTIDE SEQUENCE [LARGE SCALE MRNA]</scope>
</reference>
<reference key="5">
    <citation type="journal article" date="2003" name="J. Neurosci. Res.">
        <title>TorsinA in PC12 cells: localization in the endoplasmic reticulum and response to stress.</title>
        <authorList>
            <person name="Hewett J."/>
            <person name="Ziefer P."/>
            <person name="Bergeron D."/>
            <person name="Naismith T."/>
            <person name="Boston H."/>
            <person name="Slater D."/>
            <person name="Wilbur J."/>
            <person name="Schuback D."/>
            <person name="Kamm C."/>
            <person name="Smith N."/>
            <person name="Camp S."/>
            <person name="Ozelius L.J."/>
            <person name="Ramesh V."/>
            <person name="Hanson P.I."/>
            <person name="Breakefield X.O."/>
        </authorList>
    </citation>
    <scope>SUBCELLULAR LOCATION</scope>
    <scope>GLYCOSYLATION</scope>
</reference>
<reference key="6">
    <citation type="journal article" date="2004" name="J. Biol. Chem.">
        <title>The early onset dystonia protein torsinA interacts with kinesin light chain 1.</title>
        <authorList>
            <person name="Kamm C."/>
            <person name="Boston H."/>
            <person name="Hewett J."/>
            <person name="Wilbur J."/>
            <person name="Corey D.P."/>
            <person name="Hanson P.I."/>
            <person name="Ramesh V."/>
            <person name="Breakefield X.O."/>
        </authorList>
    </citation>
    <scope>INTERACTION WITH KLC1</scope>
    <scope>SUBCELLULAR LOCATION</scope>
    <scope>TISSUE SPECIFICITY</scope>
    <scope>GLYCOSYLATION</scope>
</reference>
<reference key="7">
    <citation type="journal article" date="2008" name="J. Biol. Chem.">
        <title>The dystonia-associated protein torsinA modulates synaptic vesicle recycling.</title>
        <authorList>
            <person name="Granata A."/>
            <person name="Watson R."/>
            <person name="Collinson L.M."/>
            <person name="Schiavo G."/>
            <person name="Warner T.T."/>
        </authorList>
    </citation>
    <scope>SUBCELLULAR LOCATION</scope>
</reference>
<reference key="8">
    <citation type="journal article" date="2011" name="EMBO J.">
        <title>CSN complex controls the stability of selected synaptic proteins via a torsinA-dependent process.</title>
        <authorList>
            <person name="Granata A."/>
            <person name="Koo S.J."/>
            <person name="Haucke V."/>
            <person name="Schiavo G."/>
            <person name="Warner T.T."/>
        </authorList>
    </citation>
    <scope>INTERACTION WITH COPS4; SNAPIN AND STON2</scope>
    <scope>SUBCELLULAR LOCATION</scope>
</reference>
<name>TOR1A_RAT</name>
<feature type="signal peptide" evidence="1">
    <location>
        <begin position="1"/>
        <end position="20"/>
    </location>
</feature>
<feature type="chain" id="PRO_0000429276" description="Torsin-1A">
    <location>
        <begin position="21"/>
        <end position="333"/>
    </location>
</feature>
<feature type="region of interest" description="Interaction with SNAPIN" evidence="1">
    <location>
        <begin position="92"/>
        <end position="252"/>
    </location>
</feature>
<feature type="region of interest" description="Interaction with KLC1" evidence="1">
    <location>
        <begin position="252"/>
        <end position="333"/>
    </location>
</feature>
<feature type="region of interest" description="Interaction with SYNE3" evidence="1">
    <location>
        <begin position="313"/>
        <end position="333"/>
    </location>
</feature>
<feature type="glycosylation site" description="N-linked (GlcNAc...) asparagine">
    <location>
        <position position="144"/>
    </location>
</feature>
<feature type="glycosylation site" description="N-linked (GlcNAc...) asparagine">
    <location>
        <position position="159"/>
    </location>
</feature>
<feature type="sequence conflict" description="In Ref. 1; AAL05259." evidence="6" ref="1">
    <original>G</original>
    <variation>S</variation>
    <location>
        <position position="179"/>
    </location>
</feature>
<proteinExistence type="evidence at protein level"/>
<organism>
    <name type="scientific">Rattus norvegicus</name>
    <name type="common">Rat</name>
    <dbReference type="NCBI Taxonomy" id="10116"/>
    <lineage>
        <taxon>Eukaryota</taxon>
        <taxon>Metazoa</taxon>
        <taxon>Chordata</taxon>
        <taxon>Craniata</taxon>
        <taxon>Vertebrata</taxon>
        <taxon>Euteleostomi</taxon>
        <taxon>Mammalia</taxon>
        <taxon>Eutheria</taxon>
        <taxon>Euarchontoglires</taxon>
        <taxon>Glires</taxon>
        <taxon>Rodentia</taxon>
        <taxon>Myomorpha</taxon>
        <taxon>Muroidea</taxon>
        <taxon>Muridae</taxon>
        <taxon>Murinae</taxon>
        <taxon>Rattus</taxon>
    </lineage>
</organism>
<dbReference type="EC" id="3.6.4.-"/>
<dbReference type="EMBL" id="AY054303">
    <property type="protein sequence ID" value="AAL05259.1"/>
    <property type="molecule type" value="mRNA"/>
</dbReference>
<dbReference type="EMBL" id="AABR06022147">
    <property type="status" value="NOT_ANNOTATED_CDS"/>
    <property type="molecule type" value="Genomic_DNA"/>
</dbReference>
<dbReference type="EMBL" id="CH474001">
    <property type="protein sequence ID" value="EDL93286.1"/>
    <property type="molecule type" value="Genomic_DNA"/>
</dbReference>
<dbReference type="EMBL" id="BC078714">
    <property type="protein sequence ID" value="AAH78714.1"/>
    <property type="molecule type" value="mRNA"/>
</dbReference>
<dbReference type="RefSeq" id="NP_695215.2">
    <property type="nucleotide sequence ID" value="NM_153303.2"/>
</dbReference>
<dbReference type="SMR" id="Q68G38"/>
<dbReference type="BioGRID" id="251758">
    <property type="interactions" value="1"/>
</dbReference>
<dbReference type="FunCoup" id="Q68G38">
    <property type="interactions" value="3126"/>
</dbReference>
<dbReference type="IntAct" id="Q68G38">
    <property type="interactions" value="2"/>
</dbReference>
<dbReference type="MINT" id="Q68G38"/>
<dbReference type="STRING" id="10116.ENSRNOP00000063691"/>
<dbReference type="GlyCosmos" id="Q68G38">
    <property type="glycosylation" value="2 sites, No reported glycans"/>
</dbReference>
<dbReference type="GlyGen" id="Q68G38">
    <property type="glycosylation" value="2 sites"/>
</dbReference>
<dbReference type="PhosphoSitePlus" id="Q68G38"/>
<dbReference type="jPOST" id="Q68G38"/>
<dbReference type="PaxDb" id="10116-ENSRNOP00000063691"/>
<dbReference type="Ensembl" id="ENSRNOT00000064660.4">
    <property type="protein sequence ID" value="ENSRNOP00000063691.1"/>
    <property type="gene ID" value="ENSRNOG00000006894.8"/>
</dbReference>
<dbReference type="GeneID" id="266606"/>
<dbReference type="KEGG" id="rno:266606"/>
<dbReference type="UCSC" id="RGD:628863">
    <property type="organism name" value="rat"/>
</dbReference>
<dbReference type="AGR" id="RGD:628863"/>
<dbReference type="CTD" id="1861"/>
<dbReference type="RGD" id="628863">
    <property type="gene designation" value="Tor1a"/>
</dbReference>
<dbReference type="eggNOG" id="KOG2170">
    <property type="taxonomic scope" value="Eukaryota"/>
</dbReference>
<dbReference type="GeneTree" id="ENSGT00950000182888"/>
<dbReference type="HOGENOM" id="CLU_053537_0_0_1"/>
<dbReference type="InParanoid" id="Q68G38"/>
<dbReference type="OMA" id="YTKLDYY"/>
<dbReference type="OrthoDB" id="30203at9989"/>
<dbReference type="PhylomeDB" id="Q68G38"/>
<dbReference type="TreeFam" id="TF314941"/>
<dbReference type="Reactome" id="R-RNO-8856825">
    <property type="pathway name" value="Cargo recognition for clathrin-mediated endocytosis"/>
</dbReference>
<dbReference type="PRO" id="PR:Q68G38"/>
<dbReference type="Proteomes" id="UP000002494">
    <property type="component" value="Chromosome 3"/>
</dbReference>
<dbReference type="Proteomes" id="UP000234681">
    <property type="component" value="Chromosome 3"/>
</dbReference>
<dbReference type="Bgee" id="ENSRNOG00000006894">
    <property type="expression patterns" value="Expressed in pancreas and 20 other cell types or tissues"/>
</dbReference>
<dbReference type="GO" id="GO:0005737">
    <property type="term" value="C:cytoplasm"/>
    <property type="evidence" value="ECO:0000266"/>
    <property type="project" value="RGD"/>
</dbReference>
<dbReference type="GO" id="GO:0030659">
    <property type="term" value="C:cytoplasmic vesicle membrane"/>
    <property type="evidence" value="ECO:0007669"/>
    <property type="project" value="UniProtKB-SubCell"/>
</dbReference>
<dbReference type="GO" id="GO:0005783">
    <property type="term" value="C:endoplasmic reticulum"/>
    <property type="evidence" value="ECO:0000266"/>
    <property type="project" value="RGD"/>
</dbReference>
<dbReference type="GO" id="GO:0005788">
    <property type="term" value="C:endoplasmic reticulum lumen"/>
    <property type="evidence" value="ECO:0000250"/>
    <property type="project" value="UniProtKB"/>
</dbReference>
<dbReference type="GO" id="GO:0005789">
    <property type="term" value="C:endoplasmic reticulum membrane"/>
    <property type="evidence" value="ECO:0000250"/>
    <property type="project" value="UniProtKB"/>
</dbReference>
<dbReference type="GO" id="GO:0030426">
    <property type="term" value="C:growth cone"/>
    <property type="evidence" value="ECO:0000314"/>
    <property type="project" value="UniProtKB"/>
</dbReference>
<dbReference type="GO" id="GO:0016020">
    <property type="term" value="C:membrane"/>
    <property type="evidence" value="ECO:0000266"/>
    <property type="project" value="RGD"/>
</dbReference>
<dbReference type="GO" id="GO:0005635">
    <property type="term" value="C:nuclear envelope"/>
    <property type="evidence" value="ECO:0000250"/>
    <property type="project" value="UniProtKB"/>
</dbReference>
<dbReference type="GO" id="GO:0005637">
    <property type="term" value="C:nuclear inner membrane"/>
    <property type="evidence" value="ECO:0007669"/>
    <property type="project" value="UniProtKB-SubCell"/>
</dbReference>
<dbReference type="GO" id="GO:0005634">
    <property type="term" value="C:nucleus"/>
    <property type="evidence" value="ECO:0000266"/>
    <property type="project" value="RGD"/>
</dbReference>
<dbReference type="GO" id="GO:0030141">
    <property type="term" value="C:secretory granule"/>
    <property type="evidence" value="ECO:0000314"/>
    <property type="project" value="UniProtKB"/>
</dbReference>
<dbReference type="GO" id="GO:0008021">
    <property type="term" value="C:synaptic vesicle"/>
    <property type="evidence" value="ECO:0000314"/>
    <property type="project" value="UniProtKB"/>
</dbReference>
<dbReference type="GO" id="GO:0005524">
    <property type="term" value="F:ATP binding"/>
    <property type="evidence" value="ECO:0007669"/>
    <property type="project" value="InterPro"/>
</dbReference>
<dbReference type="GO" id="GO:0016887">
    <property type="term" value="F:ATP hydrolysis activity"/>
    <property type="evidence" value="ECO:0000250"/>
    <property type="project" value="UniProtKB"/>
</dbReference>
<dbReference type="GO" id="GO:0140662">
    <property type="term" value="F:ATP-dependent protein folding chaperone"/>
    <property type="evidence" value="ECO:0000250"/>
    <property type="project" value="UniProtKB"/>
</dbReference>
<dbReference type="GO" id="GO:0008092">
    <property type="term" value="F:cytoskeletal protein binding"/>
    <property type="evidence" value="ECO:0000266"/>
    <property type="project" value="RGD"/>
</dbReference>
<dbReference type="GO" id="GO:0042802">
    <property type="term" value="F:identical protein binding"/>
    <property type="evidence" value="ECO:0000250"/>
    <property type="project" value="UniProtKB"/>
</dbReference>
<dbReference type="GO" id="GO:0019894">
    <property type="term" value="F:kinesin binding"/>
    <property type="evidence" value="ECO:0000314"/>
    <property type="project" value="RGD"/>
</dbReference>
<dbReference type="GO" id="GO:0051787">
    <property type="term" value="F:misfolded protein binding"/>
    <property type="evidence" value="ECO:0000266"/>
    <property type="project" value="RGD"/>
</dbReference>
<dbReference type="GO" id="GO:0007155">
    <property type="term" value="P:cell adhesion"/>
    <property type="evidence" value="ECO:0000250"/>
    <property type="project" value="UniProtKB"/>
</dbReference>
<dbReference type="GO" id="GO:0051085">
    <property type="term" value="P:chaperone cofactor-dependent protein refolding"/>
    <property type="evidence" value="ECO:0007669"/>
    <property type="project" value="InterPro"/>
</dbReference>
<dbReference type="GO" id="GO:0061077">
    <property type="term" value="P:chaperone-mediated protein folding"/>
    <property type="evidence" value="ECO:0000250"/>
    <property type="project" value="UniProtKB"/>
</dbReference>
<dbReference type="GO" id="GO:0036503">
    <property type="term" value="P:ERAD pathway"/>
    <property type="evidence" value="ECO:0000250"/>
    <property type="project" value="UniProtKB"/>
</dbReference>
<dbReference type="GO" id="GO:0045104">
    <property type="term" value="P:intermediate filament cytoskeleton organization"/>
    <property type="evidence" value="ECO:0000250"/>
    <property type="project" value="UniProtKB"/>
</dbReference>
<dbReference type="GO" id="GO:0031175">
    <property type="term" value="P:neuron projection development"/>
    <property type="evidence" value="ECO:0000250"/>
    <property type="project" value="UniProtKB"/>
</dbReference>
<dbReference type="GO" id="GO:0006998">
    <property type="term" value="P:nuclear envelope organization"/>
    <property type="evidence" value="ECO:0000250"/>
    <property type="project" value="UniProtKB"/>
</dbReference>
<dbReference type="GO" id="GO:0071763">
    <property type="term" value="P:nuclear membrane organization"/>
    <property type="evidence" value="ECO:0000250"/>
    <property type="project" value="UniProtKB"/>
</dbReference>
<dbReference type="GO" id="GO:0006996">
    <property type="term" value="P:organelle organization"/>
    <property type="evidence" value="ECO:0000250"/>
    <property type="project" value="UniProtKB"/>
</dbReference>
<dbReference type="GO" id="GO:1900244">
    <property type="term" value="P:positive regulation of synaptic vesicle endocytosis"/>
    <property type="evidence" value="ECO:0000250"/>
    <property type="project" value="UniProtKB"/>
</dbReference>
<dbReference type="GO" id="GO:0000338">
    <property type="term" value="P:protein deneddylation"/>
    <property type="evidence" value="ECO:0000250"/>
    <property type="project" value="UniProtKB"/>
</dbReference>
<dbReference type="GO" id="GO:0034504">
    <property type="term" value="P:protein localization to nucleus"/>
    <property type="evidence" value="ECO:0000250"/>
    <property type="project" value="UniProtKB"/>
</dbReference>
<dbReference type="GO" id="GO:0051584">
    <property type="term" value="P:regulation of dopamine uptake involved in synaptic transmission"/>
    <property type="evidence" value="ECO:0000250"/>
    <property type="project" value="UniProtKB"/>
</dbReference>
<dbReference type="GO" id="GO:2000008">
    <property type="term" value="P:regulation of protein localization to cell surface"/>
    <property type="evidence" value="ECO:0000250"/>
    <property type="project" value="UniProtKB"/>
</dbReference>
<dbReference type="GO" id="GO:0006979">
    <property type="term" value="P:response to oxidative stress"/>
    <property type="evidence" value="ECO:0000314"/>
    <property type="project" value="RGD"/>
</dbReference>
<dbReference type="GO" id="GO:0048499">
    <property type="term" value="P:synaptic vesicle membrane organization"/>
    <property type="evidence" value="ECO:0000250"/>
    <property type="project" value="UniProtKB"/>
</dbReference>
<dbReference type="GO" id="GO:0048489">
    <property type="term" value="P:synaptic vesicle transport"/>
    <property type="evidence" value="ECO:0000250"/>
    <property type="project" value="UniProtKB"/>
</dbReference>
<dbReference type="GO" id="GO:0044319">
    <property type="term" value="P:wound healing, spreading of cells"/>
    <property type="evidence" value="ECO:0000250"/>
    <property type="project" value="UniProtKB"/>
</dbReference>
<dbReference type="FunFam" id="3.40.50.300:FF:000743">
    <property type="entry name" value="Torsin"/>
    <property type="match status" value="1"/>
</dbReference>
<dbReference type="Gene3D" id="3.40.50.300">
    <property type="entry name" value="P-loop containing nucleotide triphosphate hydrolases"/>
    <property type="match status" value="1"/>
</dbReference>
<dbReference type="InterPro" id="IPR027417">
    <property type="entry name" value="P-loop_NTPase"/>
</dbReference>
<dbReference type="InterPro" id="IPR049337">
    <property type="entry name" value="TOR1A_C"/>
</dbReference>
<dbReference type="InterPro" id="IPR010448">
    <property type="entry name" value="Torsin"/>
</dbReference>
<dbReference type="InterPro" id="IPR017378">
    <property type="entry name" value="Torsin_1/2"/>
</dbReference>
<dbReference type="PANTHER" id="PTHR10760">
    <property type="entry name" value="TORSIN"/>
    <property type="match status" value="1"/>
</dbReference>
<dbReference type="PANTHER" id="PTHR10760:SF15">
    <property type="entry name" value="TORSIN-1A"/>
    <property type="match status" value="1"/>
</dbReference>
<dbReference type="Pfam" id="PF21376">
    <property type="entry name" value="TOR1A_C"/>
    <property type="match status" value="1"/>
</dbReference>
<dbReference type="Pfam" id="PF06309">
    <property type="entry name" value="Torsin"/>
    <property type="match status" value="1"/>
</dbReference>
<dbReference type="PIRSF" id="PIRSF038079">
    <property type="entry name" value="Torsin_2A"/>
    <property type="match status" value="1"/>
</dbReference>
<dbReference type="SUPFAM" id="SSF52540">
    <property type="entry name" value="P-loop containing nucleoside triphosphate hydrolases"/>
    <property type="match status" value="1"/>
</dbReference>
<sequence>MKLGRATLALLLLVPCVVRAVEPISLGLALAGVLTGYISYPRLYCLFAECCGQKRSLSREALQKDLDNKLFGQHLAKRVILNAVSGFLSNPKPKKPLTLSLHGWTGTGKNFASKIIAENIYEGGLNSDYVHLFVATLHFPHASNITLYKDQLQMWIRGNVSACARSIFIFDEMDKMHAGLIDAIKPFLDYYDVVDEVSYQKAIFIFLSNAGAERITDVALDFWRSGKQREEIKLRDMEHALAVSVFNNKNSGFWHSSLIDRNLIDYFVPFLPLEYKHLKMCIRVEMQSRGYEEDEDIINKVAEEMTFFPKEEKVFSDKGCKTVFTKLDYYLDD</sequence>